<dbReference type="EC" id="2.7.1.30" evidence="1"/>
<dbReference type="EMBL" id="CP000002">
    <property type="protein sequence ID" value="AAU22560.1"/>
    <property type="molecule type" value="Genomic_DNA"/>
</dbReference>
<dbReference type="EMBL" id="AE017333">
    <property type="protein sequence ID" value="AAU39903.1"/>
    <property type="molecule type" value="Genomic_DNA"/>
</dbReference>
<dbReference type="RefSeq" id="WP_003180088.1">
    <property type="nucleotide sequence ID" value="NC_006322.1"/>
</dbReference>
<dbReference type="SMR" id="Q65M11"/>
<dbReference type="STRING" id="279010.BL02903"/>
<dbReference type="GeneID" id="92862429"/>
<dbReference type="KEGG" id="bld:BLi00995"/>
<dbReference type="KEGG" id="bli:BL02903"/>
<dbReference type="eggNOG" id="COG0554">
    <property type="taxonomic scope" value="Bacteria"/>
</dbReference>
<dbReference type="HOGENOM" id="CLU_009281_2_3_9"/>
<dbReference type="UniPathway" id="UPA00618">
    <property type="reaction ID" value="UER00672"/>
</dbReference>
<dbReference type="Proteomes" id="UP000000606">
    <property type="component" value="Chromosome"/>
</dbReference>
<dbReference type="GO" id="GO:0005829">
    <property type="term" value="C:cytosol"/>
    <property type="evidence" value="ECO:0007669"/>
    <property type="project" value="TreeGrafter"/>
</dbReference>
<dbReference type="GO" id="GO:0005524">
    <property type="term" value="F:ATP binding"/>
    <property type="evidence" value="ECO:0007669"/>
    <property type="project" value="UniProtKB-UniRule"/>
</dbReference>
<dbReference type="GO" id="GO:0004370">
    <property type="term" value="F:glycerol kinase activity"/>
    <property type="evidence" value="ECO:0000250"/>
    <property type="project" value="UniProtKB"/>
</dbReference>
<dbReference type="GO" id="GO:0019563">
    <property type="term" value="P:glycerol catabolic process"/>
    <property type="evidence" value="ECO:0007669"/>
    <property type="project" value="UniProtKB-UniRule"/>
</dbReference>
<dbReference type="GO" id="GO:0006071">
    <property type="term" value="P:glycerol metabolic process"/>
    <property type="evidence" value="ECO:0000250"/>
    <property type="project" value="UniProtKB"/>
</dbReference>
<dbReference type="GO" id="GO:0006072">
    <property type="term" value="P:glycerol-3-phosphate metabolic process"/>
    <property type="evidence" value="ECO:0007669"/>
    <property type="project" value="InterPro"/>
</dbReference>
<dbReference type="CDD" id="cd07786">
    <property type="entry name" value="FGGY_EcGK_like"/>
    <property type="match status" value="1"/>
</dbReference>
<dbReference type="FunFam" id="3.30.420.40:FF:000007">
    <property type="entry name" value="Glycerol kinase"/>
    <property type="match status" value="1"/>
</dbReference>
<dbReference type="FunFam" id="3.30.420.40:FF:000008">
    <property type="entry name" value="Glycerol kinase"/>
    <property type="match status" value="1"/>
</dbReference>
<dbReference type="Gene3D" id="3.30.420.40">
    <property type="match status" value="2"/>
</dbReference>
<dbReference type="HAMAP" id="MF_00186">
    <property type="entry name" value="Glycerol_kin"/>
    <property type="match status" value="1"/>
</dbReference>
<dbReference type="InterPro" id="IPR043129">
    <property type="entry name" value="ATPase_NBD"/>
</dbReference>
<dbReference type="InterPro" id="IPR000577">
    <property type="entry name" value="Carb_kinase_FGGY"/>
</dbReference>
<dbReference type="InterPro" id="IPR018483">
    <property type="entry name" value="Carb_kinase_FGGY_CS"/>
</dbReference>
<dbReference type="InterPro" id="IPR018485">
    <property type="entry name" value="FGGY_C"/>
</dbReference>
<dbReference type="InterPro" id="IPR018484">
    <property type="entry name" value="FGGY_N"/>
</dbReference>
<dbReference type="InterPro" id="IPR005999">
    <property type="entry name" value="Glycerol_kin"/>
</dbReference>
<dbReference type="NCBIfam" id="TIGR01311">
    <property type="entry name" value="glycerol_kin"/>
    <property type="match status" value="1"/>
</dbReference>
<dbReference type="NCBIfam" id="NF000756">
    <property type="entry name" value="PRK00047.1"/>
    <property type="match status" value="1"/>
</dbReference>
<dbReference type="PANTHER" id="PTHR10196:SF69">
    <property type="entry name" value="GLYCEROL KINASE"/>
    <property type="match status" value="1"/>
</dbReference>
<dbReference type="PANTHER" id="PTHR10196">
    <property type="entry name" value="SUGAR KINASE"/>
    <property type="match status" value="1"/>
</dbReference>
<dbReference type="Pfam" id="PF02782">
    <property type="entry name" value="FGGY_C"/>
    <property type="match status" value="1"/>
</dbReference>
<dbReference type="Pfam" id="PF00370">
    <property type="entry name" value="FGGY_N"/>
    <property type="match status" value="1"/>
</dbReference>
<dbReference type="PIRSF" id="PIRSF000538">
    <property type="entry name" value="GlpK"/>
    <property type="match status" value="1"/>
</dbReference>
<dbReference type="SUPFAM" id="SSF53067">
    <property type="entry name" value="Actin-like ATPase domain"/>
    <property type="match status" value="2"/>
</dbReference>
<dbReference type="PROSITE" id="PS00933">
    <property type="entry name" value="FGGY_KINASES_1"/>
    <property type="match status" value="1"/>
</dbReference>
<dbReference type="PROSITE" id="PS00445">
    <property type="entry name" value="FGGY_KINASES_2"/>
    <property type="match status" value="1"/>
</dbReference>
<proteinExistence type="inferred from homology"/>
<accession>Q65M11</accession>
<accession>Q62XE8</accession>
<keyword id="KW-0067">ATP-binding</keyword>
<keyword id="KW-0319">Glycerol metabolism</keyword>
<keyword id="KW-0418">Kinase</keyword>
<keyword id="KW-0547">Nucleotide-binding</keyword>
<keyword id="KW-0597">Phosphoprotein</keyword>
<keyword id="KW-1185">Reference proteome</keyword>
<keyword id="KW-0808">Transferase</keyword>
<protein>
    <recommendedName>
        <fullName evidence="1">Glycerol kinase</fullName>
        <ecNumber evidence="1">2.7.1.30</ecNumber>
    </recommendedName>
    <alternativeName>
        <fullName evidence="1">ATP:glycerol 3-phosphotransferase</fullName>
    </alternativeName>
    <alternativeName>
        <fullName evidence="1">Glycerokinase</fullName>
        <shortName evidence="1">GK</shortName>
    </alternativeName>
</protein>
<reference key="1">
    <citation type="journal article" date="2004" name="J. Mol. Microbiol. Biotechnol.">
        <title>The complete genome sequence of Bacillus licheniformis DSM13, an organism with great industrial potential.</title>
        <authorList>
            <person name="Veith B."/>
            <person name="Herzberg C."/>
            <person name="Steckel S."/>
            <person name="Feesche J."/>
            <person name="Maurer K.H."/>
            <person name="Ehrenreich P."/>
            <person name="Baeumer S."/>
            <person name="Henne A."/>
            <person name="Liesegang H."/>
            <person name="Merkl R."/>
            <person name="Ehrenreich A."/>
            <person name="Gottschalk G."/>
        </authorList>
    </citation>
    <scope>NUCLEOTIDE SEQUENCE [LARGE SCALE GENOMIC DNA]</scope>
    <source>
        <strain>ATCC 14580 / DSM 13 / JCM 2505 / CCUG 7422 / NBRC 12200 / NCIMB 9375 / NCTC 10341 / NRRL NRS-1264 / Gibson 46</strain>
    </source>
</reference>
<reference key="2">
    <citation type="journal article" date="2004" name="Genome Biol.">
        <title>Complete genome sequence of the industrial bacterium Bacillus licheniformis and comparisons with closely related Bacillus species.</title>
        <authorList>
            <person name="Rey M.W."/>
            <person name="Ramaiya P."/>
            <person name="Nelson B.A."/>
            <person name="Brody-Karpin S.D."/>
            <person name="Zaretsky E.J."/>
            <person name="Tang M."/>
            <person name="Lopez de Leon A."/>
            <person name="Xiang H."/>
            <person name="Gusti V."/>
            <person name="Clausen I.G."/>
            <person name="Olsen P.B."/>
            <person name="Rasmussen M.D."/>
            <person name="Andersen J.T."/>
            <person name="Joergensen P.L."/>
            <person name="Larsen T.S."/>
            <person name="Sorokin A."/>
            <person name="Bolotin A."/>
            <person name="Lapidus A."/>
            <person name="Galleron N."/>
            <person name="Ehrlich S.D."/>
            <person name="Berka R.M."/>
        </authorList>
    </citation>
    <scope>NUCLEOTIDE SEQUENCE [LARGE SCALE GENOMIC DNA]</scope>
    <source>
        <strain>ATCC 14580 / DSM 13 / JCM 2505 / CCUG 7422 / NBRC 12200 / NCIMB 9375 / NCTC 10341 / NRRL NRS-1264 / Gibson 46</strain>
    </source>
</reference>
<sequence>MEKYILSLDQGTTSTRAIVFNKAGEIVHIAQKEFRQYFPNPGWVEHNANEIWGSVLSVIASALSESGIEAGQIAGIGITNQRETTVVWDKHTGKPVYNAIVWQSRQSAEICQELKEKGYEETIREKTGLLIDPYFSGTKVKWILDHVEGAREKAENGDLLFGTIDSWLIWKMSGGKAHVTDYSNASRTLMFNIYDLKWDDELLDILGVPKSMLPEVKPSSHVYAETVDYHFFGKNIPIAGAAGDQQAALFGQACFEEGMVKNTYGTGCFMLMNTGEKAIKSEHGLLTTIAWGIDGKVEYALEGSVFVAGSAIQWLRDGLRMFKDAKESEKYAVRAESADGVYVVPAFVGLGTPYWDSDVRGAVFGLTRGTTKEHFIRATLEALAYQTKDVLDAMKEDSGIPVKTLRVDGGAVKNNFLMDFQGDILDVPVERPEINETTALGSAYLAGLAVGFWSDRSEIKDQWQLDKRFEPKMEEKERESLYNGWKKAVNAARAFK</sequence>
<name>GLPK_BACLD</name>
<comment type="function">
    <text evidence="1">Key enzyme in the regulation of glycerol uptake and metabolism. Catalyzes the phosphorylation of glycerol to yield sn-glycerol 3-phosphate.</text>
</comment>
<comment type="catalytic activity">
    <reaction evidence="1">
        <text>glycerol + ATP = sn-glycerol 3-phosphate + ADP + H(+)</text>
        <dbReference type="Rhea" id="RHEA:21644"/>
        <dbReference type="ChEBI" id="CHEBI:15378"/>
        <dbReference type="ChEBI" id="CHEBI:17754"/>
        <dbReference type="ChEBI" id="CHEBI:30616"/>
        <dbReference type="ChEBI" id="CHEBI:57597"/>
        <dbReference type="ChEBI" id="CHEBI:456216"/>
        <dbReference type="EC" id="2.7.1.30"/>
    </reaction>
</comment>
<comment type="activity regulation">
    <text evidence="1">Activated by phosphorylation and inhibited by fructose 1,6-bisphosphate (FBP).</text>
</comment>
<comment type="pathway">
    <text evidence="1">Polyol metabolism; glycerol degradation via glycerol kinase pathway; sn-glycerol 3-phosphate from glycerol: step 1/1.</text>
</comment>
<comment type="subunit">
    <text evidence="1">Homotetramer and homodimer (in equilibrium).</text>
</comment>
<comment type="PTM">
    <text evidence="1">The phosphoenolpyruvate-dependent sugar phosphotransferase system (PTS), including enzyme I, and histidine-containing protein (HPr) are required for the phosphorylation, which leads to the activation of the enzyme.</text>
</comment>
<comment type="similarity">
    <text evidence="1">Belongs to the FGGY kinase family.</text>
</comment>
<feature type="chain" id="PRO_1000020702" description="Glycerol kinase">
    <location>
        <begin position="1"/>
        <end position="496"/>
    </location>
</feature>
<feature type="binding site" evidence="1">
    <location>
        <position position="12"/>
    </location>
    <ligand>
        <name>ADP</name>
        <dbReference type="ChEBI" id="CHEBI:456216"/>
    </ligand>
</feature>
<feature type="binding site" evidence="1">
    <location>
        <position position="12"/>
    </location>
    <ligand>
        <name>ATP</name>
        <dbReference type="ChEBI" id="CHEBI:30616"/>
    </ligand>
</feature>
<feature type="binding site" evidence="1">
    <location>
        <position position="12"/>
    </location>
    <ligand>
        <name>sn-glycerol 3-phosphate</name>
        <dbReference type="ChEBI" id="CHEBI:57597"/>
    </ligand>
</feature>
<feature type="binding site" evidence="1">
    <location>
        <position position="13"/>
    </location>
    <ligand>
        <name>ATP</name>
        <dbReference type="ChEBI" id="CHEBI:30616"/>
    </ligand>
</feature>
<feature type="binding site" evidence="1">
    <location>
        <position position="14"/>
    </location>
    <ligand>
        <name>ATP</name>
        <dbReference type="ChEBI" id="CHEBI:30616"/>
    </ligand>
</feature>
<feature type="binding site" evidence="1">
    <location>
        <position position="16"/>
    </location>
    <ligand>
        <name>ADP</name>
        <dbReference type="ChEBI" id="CHEBI:456216"/>
    </ligand>
</feature>
<feature type="binding site" evidence="1">
    <location>
        <position position="82"/>
    </location>
    <ligand>
        <name>glycerol</name>
        <dbReference type="ChEBI" id="CHEBI:17754"/>
    </ligand>
</feature>
<feature type="binding site" evidence="1">
    <location>
        <position position="82"/>
    </location>
    <ligand>
        <name>sn-glycerol 3-phosphate</name>
        <dbReference type="ChEBI" id="CHEBI:57597"/>
    </ligand>
</feature>
<feature type="binding site" evidence="1">
    <location>
        <position position="83"/>
    </location>
    <ligand>
        <name>glycerol</name>
        <dbReference type="ChEBI" id="CHEBI:17754"/>
    </ligand>
</feature>
<feature type="binding site" evidence="1">
    <location>
        <position position="83"/>
    </location>
    <ligand>
        <name>sn-glycerol 3-phosphate</name>
        <dbReference type="ChEBI" id="CHEBI:57597"/>
    </ligand>
</feature>
<feature type="binding site" evidence="1">
    <location>
        <position position="134"/>
    </location>
    <ligand>
        <name>glycerol</name>
        <dbReference type="ChEBI" id="CHEBI:17754"/>
    </ligand>
</feature>
<feature type="binding site" evidence="1">
    <location>
        <position position="134"/>
    </location>
    <ligand>
        <name>sn-glycerol 3-phosphate</name>
        <dbReference type="ChEBI" id="CHEBI:57597"/>
    </ligand>
</feature>
<feature type="binding site" evidence="1">
    <location>
        <position position="244"/>
    </location>
    <ligand>
        <name>glycerol</name>
        <dbReference type="ChEBI" id="CHEBI:17754"/>
    </ligand>
</feature>
<feature type="binding site" evidence="1">
    <location>
        <position position="244"/>
    </location>
    <ligand>
        <name>sn-glycerol 3-phosphate</name>
        <dbReference type="ChEBI" id="CHEBI:57597"/>
    </ligand>
</feature>
<feature type="binding site" evidence="1">
    <location>
        <position position="245"/>
    </location>
    <ligand>
        <name>glycerol</name>
        <dbReference type="ChEBI" id="CHEBI:17754"/>
    </ligand>
</feature>
<feature type="binding site" evidence="1">
    <location>
        <position position="266"/>
    </location>
    <ligand>
        <name>ADP</name>
        <dbReference type="ChEBI" id="CHEBI:456216"/>
    </ligand>
</feature>
<feature type="binding site" evidence="1">
    <location>
        <position position="266"/>
    </location>
    <ligand>
        <name>ATP</name>
        <dbReference type="ChEBI" id="CHEBI:30616"/>
    </ligand>
</feature>
<feature type="binding site" evidence="1">
    <location>
        <position position="309"/>
    </location>
    <ligand>
        <name>ADP</name>
        <dbReference type="ChEBI" id="CHEBI:456216"/>
    </ligand>
</feature>
<feature type="binding site" evidence="1">
    <location>
        <position position="309"/>
    </location>
    <ligand>
        <name>ATP</name>
        <dbReference type="ChEBI" id="CHEBI:30616"/>
    </ligand>
</feature>
<feature type="binding site" evidence="1">
    <location>
        <position position="313"/>
    </location>
    <ligand>
        <name>ATP</name>
        <dbReference type="ChEBI" id="CHEBI:30616"/>
    </ligand>
</feature>
<feature type="binding site" evidence="1">
    <location>
        <position position="410"/>
    </location>
    <ligand>
        <name>ADP</name>
        <dbReference type="ChEBI" id="CHEBI:456216"/>
    </ligand>
</feature>
<feature type="binding site" evidence="1">
    <location>
        <position position="410"/>
    </location>
    <ligand>
        <name>ATP</name>
        <dbReference type="ChEBI" id="CHEBI:30616"/>
    </ligand>
</feature>
<feature type="binding site" evidence="1">
    <location>
        <position position="414"/>
    </location>
    <ligand>
        <name>ADP</name>
        <dbReference type="ChEBI" id="CHEBI:456216"/>
    </ligand>
</feature>
<feature type="modified residue" description="Phosphohistidine; by HPr" evidence="1">
    <location>
        <position position="230"/>
    </location>
</feature>
<evidence type="ECO:0000255" key="1">
    <source>
        <dbReference type="HAMAP-Rule" id="MF_00186"/>
    </source>
</evidence>
<organism>
    <name type="scientific">Bacillus licheniformis (strain ATCC 14580 / DSM 13 / JCM 2505 / CCUG 7422 / NBRC 12200 / NCIMB 9375 / NCTC 10341 / NRRL NRS-1264 / Gibson 46)</name>
    <dbReference type="NCBI Taxonomy" id="279010"/>
    <lineage>
        <taxon>Bacteria</taxon>
        <taxon>Bacillati</taxon>
        <taxon>Bacillota</taxon>
        <taxon>Bacilli</taxon>
        <taxon>Bacillales</taxon>
        <taxon>Bacillaceae</taxon>
        <taxon>Bacillus</taxon>
    </lineage>
</organism>
<gene>
    <name evidence="1" type="primary">glpK</name>
    <name type="ordered locus">BLi00995</name>
    <name type="ordered locus">BL02903</name>
</gene>